<gene>
    <name evidence="12" type="primary">Snx19</name>
    <name evidence="10" type="synonym">Kiaa0254</name>
</gene>
<proteinExistence type="evidence at protein level"/>
<reference evidence="10" key="1">
    <citation type="journal article" date="2003" name="DNA Res.">
        <title>Prediction of the coding sequences of mouse homologues of KIAA gene: II. The complete nucleotide sequences of 400 mouse KIAA-homologous cDNAs identified by screening of terminal sequences of cDNA clones randomly sampled from size-fractionated libraries.</title>
        <authorList>
            <person name="Okazaki N."/>
            <person name="Kikuno R."/>
            <person name="Ohara R."/>
            <person name="Inamoto S."/>
            <person name="Aizawa H."/>
            <person name="Yuasa S."/>
            <person name="Nakajima D."/>
            <person name="Nagase T."/>
            <person name="Ohara O."/>
            <person name="Koga H."/>
        </authorList>
    </citation>
    <scope>NUCLEOTIDE SEQUENCE [LARGE SCALE MRNA]</scope>
    <source>
        <tissue evidence="10">Brain</tissue>
    </source>
</reference>
<reference evidence="13" key="2">
    <citation type="journal article" date="2009" name="PLoS Biol.">
        <title>Lineage-specific biology revealed by a finished genome assembly of the mouse.</title>
        <authorList>
            <person name="Church D.M."/>
            <person name="Goodstadt L."/>
            <person name="Hillier L.W."/>
            <person name="Zody M.C."/>
            <person name="Goldstein S."/>
            <person name="She X."/>
            <person name="Bult C.J."/>
            <person name="Agarwala R."/>
            <person name="Cherry J.L."/>
            <person name="DiCuccio M."/>
            <person name="Hlavina W."/>
            <person name="Kapustin Y."/>
            <person name="Meric P."/>
            <person name="Maglott D."/>
            <person name="Birtle Z."/>
            <person name="Marques A.C."/>
            <person name="Graves T."/>
            <person name="Zhou S."/>
            <person name="Teague B."/>
            <person name="Potamousis K."/>
            <person name="Churas C."/>
            <person name="Place M."/>
            <person name="Herschleb J."/>
            <person name="Runnheim R."/>
            <person name="Forrest D."/>
            <person name="Amos-Landgraf J."/>
            <person name="Schwartz D.C."/>
            <person name="Cheng Z."/>
            <person name="Lindblad-Toh K."/>
            <person name="Eichler E.E."/>
            <person name="Ponting C.P."/>
        </authorList>
    </citation>
    <scope>NUCLEOTIDE SEQUENCE [LARGE SCALE GENOMIC DNA]</scope>
    <source>
        <strain evidence="13">C57BL/6J</strain>
    </source>
</reference>
<reference key="3">
    <citation type="journal article" date="2004" name="Genome Res.">
        <title>The status, quality, and expansion of the NIH full-length cDNA project: the Mammalian Gene Collection (MGC).</title>
        <authorList>
            <consortium name="The MGC Project Team"/>
        </authorList>
    </citation>
    <scope>NUCLEOTIDE SEQUENCE [LARGE SCALE MRNA]</scope>
    <source>
        <strain evidence="9">C57BL/6J</strain>
        <tissue evidence="9">Brain</tissue>
    </source>
</reference>
<reference key="4">
    <citation type="journal article" date="2005" name="Science">
        <title>The transcriptional landscape of the mammalian genome.</title>
        <authorList>
            <person name="Carninci P."/>
            <person name="Kasukawa T."/>
            <person name="Katayama S."/>
            <person name="Gough J."/>
            <person name="Frith M.C."/>
            <person name="Maeda N."/>
            <person name="Oyama R."/>
            <person name="Ravasi T."/>
            <person name="Lenhard B."/>
            <person name="Wells C."/>
            <person name="Kodzius R."/>
            <person name="Shimokawa K."/>
            <person name="Bajic V.B."/>
            <person name="Brenner S.E."/>
            <person name="Batalov S."/>
            <person name="Forrest A.R."/>
            <person name="Zavolan M."/>
            <person name="Davis M.J."/>
            <person name="Wilming L.G."/>
            <person name="Aidinis V."/>
            <person name="Allen J.E."/>
            <person name="Ambesi-Impiombato A."/>
            <person name="Apweiler R."/>
            <person name="Aturaliya R.N."/>
            <person name="Bailey T.L."/>
            <person name="Bansal M."/>
            <person name="Baxter L."/>
            <person name="Beisel K.W."/>
            <person name="Bersano T."/>
            <person name="Bono H."/>
            <person name="Chalk A.M."/>
            <person name="Chiu K.P."/>
            <person name="Choudhary V."/>
            <person name="Christoffels A."/>
            <person name="Clutterbuck D.R."/>
            <person name="Crowe M.L."/>
            <person name="Dalla E."/>
            <person name="Dalrymple B.P."/>
            <person name="de Bono B."/>
            <person name="Della Gatta G."/>
            <person name="di Bernardo D."/>
            <person name="Down T."/>
            <person name="Engstrom P."/>
            <person name="Fagiolini M."/>
            <person name="Faulkner G."/>
            <person name="Fletcher C.F."/>
            <person name="Fukushima T."/>
            <person name="Furuno M."/>
            <person name="Futaki S."/>
            <person name="Gariboldi M."/>
            <person name="Georgii-Hemming P."/>
            <person name="Gingeras T.R."/>
            <person name="Gojobori T."/>
            <person name="Green R.E."/>
            <person name="Gustincich S."/>
            <person name="Harbers M."/>
            <person name="Hayashi Y."/>
            <person name="Hensch T.K."/>
            <person name="Hirokawa N."/>
            <person name="Hill D."/>
            <person name="Huminiecki L."/>
            <person name="Iacono M."/>
            <person name="Ikeo K."/>
            <person name="Iwama A."/>
            <person name="Ishikawa T."/>
            <person name="Jakt M."/>
            <person name="Kanapin A."/>
            <person name="Katoh M."/>
            <person name="Kawasawa Y."/>
            <person name="Kelso J."/>
            <person name="Kitamura H."/>
            <person name="Kitano H."/>
            <person name="Kollias G."/>
            <person name="Krishnan S.P."/>
            <person name="Kruger A."/>
            <person name="Kummerfeld S.K."/>
            <person name="Kurochkin I.V."/>
            <person name="Lareau L.F."/>
            <person name="Lazarevic D."/>
            <person name="Lipovich L."/>
            <person name="Liu J."/>
            <person name="Liuni S."/>
            <person name="McWilliam S."/>
            <person name="Madan Babu M."/>
            <person name="Madera M."/>
            <person name="Marchionni L."/>
            <person name="Matsuda H."/>
            <person name="Matsuzawa S."/>
            <person name="Miki H."/>
            <person name="Mignone F."/>
            <person name="Miyake S."/>
            <person name="Morris K."/>
            <person name="Mottagui-Tabar S."/>
            <person name="Mulder N."/>
            <person name="Nakano N."/>
            <person name="Nakauchi H."/>
            <person name="Ng P."/>
            <person name="Nilsson R."/>
            <person name="Nishiguchi S."/>
            <person name="Nishikawa S."/>
            <person name="Nori F."/>
            <person name="Ohara O."/>
            <person name="Okazaki Y."/>
            <person name="Orlando V."/>
            <person name="Pang K.C."/>
            <person name="Pavan W.J."/>
            <person name="Pavesi G."/>
            <person name="Pesole G."/>
            <person name="Petrovsky N."/>
            <person name="Piazza S."/>
            <person name="Reed J."/>
            <person name="Reid J.F."/>
            <person name="Ring B.Z."/>
            <person name="Ringwald M."/>
            <person name="Rost B."/>
            <person name="Ruan Y."/>
            <person name="Salzberg S.L."/>
            <person name="Sandelin A."/>
            <person name="Schneider C."/>
            <person name="Schoenbach C."/>
            <person name="Sekiguchi K."/>
            <person name="Semple C.A."/>
            <person name="Seno S."/>
            <person name="Sessa L."/>
            <person name="Sheng Y."/>
            <person name="Shibata Y."/>
            <person name="Shimada H."/>
            <person name="Shimada K."/>
            <person name="Silva D."/>
            <person name="Sinclair B."/>
            <person name="Sperling S."/>
            <person name="Stupka E."/>
            <person name="Sugiura K."/>
            <person name="Sultana R."/>
            <person name="Takenaka Y."/>
            <person name="Taki K."/>
            <person name="Tammoja K."/>
            <person name="Tan S.L."/>
            <person name="Tang S."/>
            <person name="Taylor M.S."/>
            <person name="Tegner J."/>
            <person name="Teichmann S.A."/>
            <person name="Ueda H.R."/>
            <person name="van Nimwegen E."/>
            <person name="Verardo R."/>
            <person name="Wei C.L."/>
            <person name="Yagi K."/>
            <person name="Yamanishi H."/>
            <person name="Zabarovsky E."/>
            <person name="Zhu S."/>
            <person name="Zimmer A."/>
            <person name="Hide W."/>
            <person name="Bult C."/>
            <person name="Grimmond S.M."/>
            <person name="Teasdale R.D."/>
            <person name="Liu E.T."/>
            <person name="Brusic V."/>
            <person name="Quackenbush J."/>
            <person name="Wahlestedt C."/>
            <person name="Mattick J.S."/>
            <person name="Hume D.A."/>
            <person name="Kai C."/>
            <person name="Sasaki D."/>
            <person name="Tomaru Y."/>
            <person name="Fukuda S."/>
            <person name="Kanamori-Katayama M."/>
            <person name="Suzuki M."/>
            <person name="Aoki J."/>
            <person name="Arakawa T."/>
            <person name="Iida J."/>
            <person name="Imamura K."/>
            <person name="Itoh M."/>
            <person name="Kato T."/>
            <person name="Kawaji H."/>
            <person name="Kawagashira N."/>
            <person name="Kawashima T."/>
            <person name="Kojima M."/>
            <person name="Kondo S."/>
            <person name="Konno H."/>
            <person name="Nakano K."/>
            <person name="Ninomiya N."/>
            <person name="Nishio T."/>
            <person name="Okada M."/>
            <person name="Plessy C."/>
            <person name="Shibata K."/>
            <person name="Shiraki T."/>
            <person name="Suzuki S."/>
            <person name="Tagami M."/>
            <person name="Waki K."/>
            <person name="Watahiki A."/>
            <person name="Okamura-Oho Y."/>
            <person name="Suzuki H."/>
            <person name="Kawai J."/>
            <person name="Hayashizaki Y."/>
        </authorList>
    </citation>
    <scope>NUCLEOTIDE SEQUENCE [LARGE SCALE MRNA] OF 1-348</scope>
    <source>
        <strain evidence="11">C57BL/6J</strain>
        <tissue evidence="11">Head</tissue>
    </source>
</reference>
<reference key="5">
    <citation type="journal article" date="2010" name="Cell">
        <title>A tissue-specific atlas of mouse protein phosphorylation and expression.</title>
        <authorList>
            <person name="Huttlin E.L."/>
            <person name="Jedrychowski M.P."/>
            <person name="Elias J.E."/>
            <person name="Goswami T."/>
            <person name="Rad R."/>
            <person name="Beausoleil S.A."/>
            <person name="Villen J."/>
            <person name="Haas W."/>
            <person name="Sowa M.E."/>
            <person name="Gygi S.P."/>
        </authorList>
    </citation>
    <scope>IDENTIFICATION BY MASS SPECTROMETRY [LARGE SCALE ANALYSIS]</scope>
    <source>
        <tissue>Brain</tissue>
        <tissue>Lung</tissue>
        <tissue>Testis</tissue>
    </source>
</reference>
<reference key="6">
    <citation type="journal article" date="2012" name="J. Diabetes Investig.">
        <title>Sorting nexin 19 regulates the number of dense core vesicles in pancreatic beta-cells.</title>
        <authorList>
            <person name="Harashima S."/>
            <person name="Horiuchi T."/>
            <person name="Wang Y."/>
            <person name="Notkins A.L."/>
            <person name="Seino Y."/>
            <person name="Inagaki N."/>
        </authorList>
    </citation>
    <scope>FUNCTION</scope>
</reference>
<reference evidence="14 15" key="7">
    <citation type="journal article" date="2014" name="J. Biol. Chem.">
        <title>Structural basis for different phosphoinositide specificities of the PX domains of sorting nexins regulating G-protein signaling.</title>
        <authorList>
            <person name="Mas C."/>
            <person name="Norwood S.J."/>
            <person name="Bugarcic A."/>
            <person name="Kinna G."/>
            <person name="Leneva N."/>
            <person name="Kovtun O."/>
            <person name="Ghai R."/>
            <person name="Ona Yanez L.E."/>
            <person name="Davis J.L."/>
            <person name="Teasdale R.D."/>
            <person name="Collins B.M."/>
        </authorList>
    </citation>
    <scope>X-RAY CRYSTALLOGRAPHY (1.90 ANGSTROMS) OF 528-664</scope>
    <scope>SUBCELLULAR LOCATION</scope>
    <scope>MUTAGENESIS OF ARG-587 AND ARG-634</scope>
    <scope>BINDING SITES</scope>
</reference>
<feature type="chain" id="PRO_0000434599" description="Sorting nexin-19">
    <location>
        <begin position="1"/>
        <end position="997"/>
    </location>
</feature>
<feature type="domain" description="PXA" evidence="3">
    <location>
        <begin position="95"/>
        <end position="273"/>
    </location>
</feature>
<feature type="domain" description="PX" evidence="2">
    <location>
        <begin position="538"/>
        <end position="668"/>
    </location>
</feature>
<feature type="region of interest" description="Disordered" evidence="4">
    <location>
        <begin position="313"/>
        <end position="333"/>
    </location>
</feature>
<feature type="region of interest" description="Disordered" evidence="4">
    <location>
        <begin position="413"/>
        <end position="437"/>
    </location>
</feature>
<feature type="region of interest" description="Disordered" evidence="4">
    <location>
        <begin position="697"/>
        <end position="728"/>
    </location>
</feature>
<feature type="compositionally biased region" description="Acidic residues" evidence="4">
    <location>
        <begin position="422"/>
        <end position="435"/>
    </location>
</feature>
<feature type="compositionally biased region" description="Basic and acidic residues" evidence="4">
    <location>
        <begin position="714"/>
        <end position="724"/>
    </location>
</feature>
<feature type="binding site" evidence="8">
    <location>
        <position position="587"/>
    </location>
    <ligand>
        <name>a 1,2-diacyl-sn-glycero-3-phospho-(1D-myo-inositol-3-phosphate)</name>
        <dbReference type="ChEBI" id="CHEBI:58088"/>
    </ligand>
</feature>
<feature type="binding site" evidence="8">
    <location>
        <position position="634"/>
    </location>
    <ligand>
        <name>a 1,2-diacyl-sn-glycero-3-phospho-(1D-myo-inositol-3-phosphate)</name>
        <dbReference type="ChEBI" id="CHEBI:58088"/>
    </ligand>
</feature>
<feature type="mutagenesis site" description="Abolishes location on endosome membranes." evidence="6">
    <original>R</original>
    <variation>A</variation>
    <location>
        <position position="587"/>
    </location>
</feature>
<feature type="mutagenesis site" description="Abolishes interaction with membranes enriched in phosphatidylinositol 3-phosphate." evidence="6">
    <original>R</original>
    <variation>Q</variation>
    <location>
        <position position="587"/>
    </location>
</feature>
<feature type="mutagenesis site" description="Abolishes interaction with membranes enriched in phosphatidylinositol 3-phosphate. Abolishes location on endosome membranes." evidence="6">
    <original>R</original>
    <variation>K</variation>
    <location>
        <position position="634"/>
    </location>
</feature>
<feature type="strand" evidence="16">
    <location>
        <begin position="535"/>
        <end position="549"/>
    </location>
</feature>
<feature type="strand" evidence="16">
    <location>
        <begin position="551"/>
        <end position="568"/>
    </location>
</feature>
<feature type="strand" evidence="16">
    <location>
        <begin position="578"/>
        <end position="586"/>
    </location>
</feature>
<feature type="helix" evidence="16">
    <location>
        <begin position="588"/>
        <end position="599"/>
    </location>
</feature>
<feature type="helix" evidence="16">
    <location>
        <begin position="602"/>
        <end position="605"/>
    </location>
</feature>
<feature type="helix" evidence="16">
    <location>
        <begin position="606"/>
        <end position="608"/>
    </location>
</feature>
<feature type="helix" evidence="16">
    <location>
        <begin position="628"/>
        <end position="646"/>
    </location>
</feature>
<feature type="helix" evidence="16">
    <location>
        <begin position="649"/>
        <end position="652"/>
    </location>
</feature>
<feature type="helix" evidence="16">
    <location>
        <begin position="655"/>
        <end position="660"/>
    </location>
</feature>
<name>SNX19_MOUSE</name>
<comment type="function">
    <text evidence="5 6">Plays a role in intracellular vesicle trafficking and exocytosis (PubMed:24843546). May play a role in maintaining insulin-containing dense core vesicles in pancreatic beta-cells and in preventing their degradation. May play a role in insulin secretion (PubMed:24843546). Interacts with membranes containing phosphatidylinositol 3-phosphate (PtdIns(3P)) (PubMed:25148684).</text>
</comment>
<comment type="subunit">
    <text evidence="1">Interacts with PTPRN.</text>
</comment>
<comment type="subcellular location">
    <subcellularLocation>
        <location evidence="8">Early endosome membrane</location>
        <topology evidence="6">Peripheral membrane protein</topology>
        <orientation evidence="6">Cytoplasmic side</orientation>
    </subcellularLocation>
    <subcellularLocation>
        <location evidence="6">Cytoplasmic vesicle membrane</location>
        <topology evidence="6">Peripheral membrane protein</topology>
        <orientation evidence="6">Cytoplasmic side</orientation>
    </subcellularLocation>
</comment>
<comment type="domain">
    <text evidence="6">The PX domain mediates specific binding to membranes enriched in phosphatidylinositol 3-phosphate (PtdIns(P3)).</text>
</comment>
<comment type="similarity">
    <text evidence="7">Belongs to the sorting nexin family.</text>
</comment>
<comment type="sequence caution" evidence="7">
    <conflict type="erroneous initiation">
        <sequence resource="EMBL-CDS" id="BAC65513"/>
    </conflict>
    <text>Extended N-terminus.</text>
</comment>
<dbReference type="EMBL" id="AK122231">
    <property type="protein sequence ID" value="BAC65513.1"/>
    <property type="status" value="ALT_INIT"/>
    <property type="molecule type" value="mRNA"/>
</dbReference>
<dbReference type="EMBL" id="AC160339">
    <property type="status" value="NOT_ANNOTATED_CDS"/>
    <property type="molecule type" value="Genomic_DNA"/>
</dbReference>
<dbReference type="EMBL" id="CU024910">
    <property type="status" value="NOT_ANNOTATED_CDS"/>
    <property type="molecule type" value="Genomic_DNA"/>
</dbReference>
<dbReference type="EMBL" id="BC063262">
    <property type="protein sequence ID" value="AAH63262.1"/>
    <property type="molecule type" value="mRNA"/>
</dbReference>
<dbReference type="EMBL" id="AK163810">
    <property type="protein sequence ID" value="BAE37501.1"/>
    <property type="molecule type" value="mRNA"/>
</dbReference>
<dbReference type="CCDS" id="CCDS22944.1"/>
<dbReference type="RefSeq" id="NP_083150.1">
    <property type="nucleotide sequence ID" value="NM_028874.2"/>
</dbReference>
<dbReference type="PDB" id="4P2I">
    <property type="method" value="X-ray"/>
    <property type="resolution" value="1.90 A"/>
    <property type="chains" value="A/B=528-664"/>
</dbReference>
<dbReference type="PDB" id="4P2J">
    <property type="method" value="X-ray"/>
    <property type="resolution" value="2.40 A"/>
    <property type="chains" value="A/B=528-664"/>
</dbReference>
<dbReference type="PDBsum" id="4P2I"/>
<dbReference type="PDBsum" id="4P2J"/>
<dbReference type="SMR" id="Q6P4T1"/>
<dbReference type="FunCoup" id="Q6P4T1">
    <property type="interactions" value="3329"/>
</dbReference>
<dbReference type="STRING" id="10090.ENSMUSP00000131895"/>
<dbReference type="GlyGen" id="Q6P4T1">
    <property type="glycosylation" value="2 sites, 1 N-linked glycan (1 site)"/>
</dbReference>
<dbReference type="iPTMnet" id="Q6P4T1"/>
<dbReference type="PhosphoSitePlus" id="Q6P4T1"/>
<dbReference type="SwissPalm" id="Q6P4T1"/>
<dbReference type="jPOST" id="Q6P4T1"/>
<dbReference type="PaxDb" id="10090-ENSMUSP00000131895"/>
<dbReference type="ProteomicsDB" id="261468"/>
<dbReference type="Pumba" id="Q6P4T1"/>
<dbReference type="Antibodypedia" id="2996">
    <property type="antibodies" value="96 antibodies from 26 providers"/>
</dbReference>
<dbReference type="Ensembl" id="ENSMUST00000164099.3">
    <property type="protein sequence ID" value="ENSMUSP00000131895.2"/>
    <property type="gene ID" value="ENSMUSG00000031993.8"/>
</dbReference>
<dbReference type="GeneID" id="102607"/>
<dbReference type="KEGG" id="mmu:102607"/>
<dbReference type="UCSC" id="uc009oqy.1">
    <property type="organism name" value="mouse"/>
</dbReference>
<dbReference type="AGR" id="MGI:1921581"/>
<dbReference type="CTD" id="399979"/>
<dbReference type="MGI" id="MGI:1921581">
    <property type="gene designation" value="Snx19"/>
</dbReference>
<dbReference type="VEuPathDB" id="HostDB:ENSMUSG00000031993"/>
<dbReference type="eggNOG" id="ENOG502QQBH">
    <property type="taxonomic scope" value="Eukaryota"/>
</dbReference>
<dbReference type="GeneTree" id="ENSGT00950000182856"/>
<dbReference type="HOGENOM" id="CLU_012033_0_0_1"/>
<dbReference type="InParanoid" id="Q6P4T1"/>
<dbReference type="OMA" id="CGQHLQS"/>
<dbReference type="OrthoDB" id="5582218at2759"/>
<dbReference type="PhylomeDB" id="Q6P4T1"/>
<dbReference type="TreeFam" id="TF324055"/>
<dbReference type="BioGRID-ORCS" id="102607">
    <property type="hits" value="1 hit in 77 CRISPR screens"/>
</dbReference>
<dbReference type="ChiTaRS" id="Snx19">
    <property type="organism name" value="mouse"/>
</dbReference>
<dbReference type="EvolutionaryTrace" id="Q6P4T1"/>
<dbReference type="PRO" id="PR:Q6P4T1"/>
<dbReference type="Proteomes" id="UP000000589">
    <property type="component" value="Chromosome 9"/>
</dbReference>
<dbReference type="RNAct" id="Q6P4T1">
    <property type="molecule type" value="protein"/>
</dbReference>
<dbReference type="Bgee" id="ENSMUSG00000031993">
    <property type="expression patterns" value="Expressed in saccule of membranous labyrinth and 245 other cell types or tissues"/>
</dbReference>
<dbReference type="ExpressionAtlas" id="Q6P4T1">
    <property type="expression patterns" value="baseline and differential"/>
</dbReference>
<dbReference type="GO" id="GO:0031901">
    <property type="term" value="C:early endosome membrane"/>
    <property type="evidence" value="ECO:0000314"/>
    <property type="project" value="MGI"/>
</dbReference>
<dbReference type="GO" id="GO:0032266">
    <property type="term" value="F:phosphatidylinositol-3-phosphate binding"/>
    <property type="evidence" value="ECO:0000314"/>
    <property type="project" value="MGI"/>
</dbReference>
<dbReference type="GO" id="GO:0002062">
    <property type="term" value="P:chondrocyte differentiation"/>
    <property type="evidence" value="ECO:0000315"/>
    <property type="project" value="MGI"/>
</dbReference>
<dbReference type="GO" id="GO:1990502">
    <property type="term" value="P:dense core granule maturation"/>
    <property type="evidence" value="ECO:0000315"/>
    <property type="project" value="MGI"/>
</dbReference>
<dbReference type="GO" id="GO:0051649">
    <property type="term" value="P:establishment of localization in cell"/>
    <property type="evidence" value="ECO:0000315"/>
    <property type="project" value="MGI"/>
</dbReference>
<dbReference type="GO" id="GO:0006887">
    <property type="term" value="P:exocytosis"/>
    <property type="evidence" value="ECO:0007669"/>
    <property type="project" value="UniProtKB-KW"/>
</dbReference>
<dbReference type="GO" id="GO:0030073">
    <property type="term" value="P:insulin secretion"/>
    <property type="evidence" value="ECO:0000315"/>
    <property type="project" value="MGI"/>
</dbReference>
<dbReference type="CDD" id="cd06893">
    <property type="entry name" value="PX_SNX19"/>
    <property type="match status" value="1"/>
</dbReference>
<dbReference type="FunFam" id="3.30.1520.10:FF:000019">
    <property type="entry name" value="Putative sorting nexin-19"/>
    <property type="match status" value="1"/>
</dbReference>
<dbReference type="Gene3D" id="3.30.1520.10">
    <property type="entry name" value="Phox-like domain"/>
    <property type="match status" value="1"/>
</dbReference>
<dbReference type="InterPro" id="IPR003114">
    <property type="entry name" value="Phox_assoc"/>
</dbReference>
<dbReference type="InterPro" id="IPR001683">
    <property type="entry name" value="PX_dom"/>
</dbReference>
<dbReference type="InterPro" id="IPR036871">
    <property type="entry name" value="PX_dom_sf"/>
</dbReference>
<dbReference type="InterPro" id="IPR037909">
    <property type="entry name" value="SNX19_PX"/>
</dbReference>
<dbReference type="InterPro" id="IPR013937">
    <property type="entry name" value="Sorting_nexin_C"/>
</dbReference>
<dbReference type="PANTHER" id="PTHR22775">
    <property type="entry name" value="SORTING NEXIN"/>
    <property type="match status" value="1"/>
</dbReference>
<dbReference type="PANTHER" id="PTHR22775:SF31">
    <property type="entry name" value="SORTING NEXIN-19"/>
    <property type="match status" value="1"/>
</dbReference>
<dbReference type="Pfam" id="PF08628">
    <property type="entry name" value="Nexin_C"/>
    <property type="match status" value="1"/>
</dbReference>
<dbReference type="Pfam" id="PF00787">
    <property type="entry name" value="PX"/>
    <property type="match status" value="1"/>
</dbReference>
<dbReference type="Pfam" id="PF02194">
    <property type="entry name" value="PXA"/>
    <property type="match status" value="1"/>
</dbReference>
<dbReference type="SMART" id="SM00312">
    <property type="entry name" value="PX"/>
    <property type="match status" value="1"/>
</dbReference>
<dbReference type="SMART" id="SM00313">
    <property type="entry name" value="PXA"/>
    <property type="match status" value="1"/>
</dbReference>
<dbReference type="SUPFAM" id="SSF64268">
    <property type="entry name" value="PX domain"/>
    <property type="match status" value="1"/>
</dbReference>
<dbReference type="PROSITE" id="PS50195">
    <property type="entry name" value="PX"/>
    <property type="match status" value="1"/>
</dbReference>
<dbReference type="PROSITE" id="PS51207">
    <property type="entry name" value="PXA"/>
    <property type="match status" value="1"/>
</dbReference>
<protein>
    <recommendedName>
        <fullName>Sorting nexin-19</fullName>
    </recommendedName>
</protein>
<evidence type="ECO:0000250" key="1">
    <source>
        <dbReference type="UniProtKB" id="Q92543"/>
    </source>
</evidence>
<evidence type="ECO:0000255" key="2">
    <source>
        <dbReference type="PROSITE-ProRule" id="PRU00147"/>
    </source>
</evidence>
<evidence type="ECO:0000255" key="3">
    <source>
        <dbReference type="PROSITE-ProRule" id="PRU00553"/>
    </source>
</evidence>
<evidence type="ECO:0000256" key="4">
    <source>
        <dbReference type="SAM" id="MobiDB-lite"/>
    </source>
</evidence>
<evidence type="ECO:0000269" key="5">
    <source>
    </source>
</evidence>
<evidence type="ECO:0000269" key="6">
    <source>
    </source>
</evidence>
<evidence type="ECO:0000305" key="7"/>
<evidence type="ECO:0000305" key="8">
    <source>
    </source>
</evidence>
<evidence type="ECO:0000312" key="9">
    <source>
        <dbReference type="EMBL" id="AAH63262.1"/>
    </source>
</evidence>
<evidence type="ECO:0000312" key="10">
    <source>
        <dbReference type="EMBL" id="BAC65513.1"/>
    </source>
</evidence>
<evidence type="ECO:0000312" key="11">
    <source>
        <dbReference type="EMBL" id="BAE37501.1"/>
    </source>
</evidence>
<evidence type="ECO:0000312" key="12">
    <source>
        <dbReference type="MGI" id="MGI:1921581"/>
    </source>
</evidence>
<evidence type="ECO:0000312" key="13">
    <source>
        <dbReference type="Proteomes" id="UP000000589"/>
    </source>
</evidence>
<evidence type="ECO:0007744" key="14">
    <source>
        <dbReference type="PDB" id="4P2I"/>
    </source>
</evidence>
<evidence type="ECO:0007744" key="15">
    <source>
        <dbReference type="PDB" id="4P2J"/>
    </source>
</evidence>
<evidence type="ECO:0007829" key="16">
    <source>
        <dbReference type="PDB" id="4P2I"/>
    </source>
</evidence>
<accession>Q6P4T1</accession>
<accession>Q3TQ83</accession>
<accession>Q80U53</accession>
<organism evidence="9">
    <name type="scientific">Mus musculus</name>
    <name type="common">Mouse</name>
    <dbReference type="NCBI Taxonomy" id="10090"/>
    <lineage>
        <taxon>Eukaryota</taxon>
        <taxon>Metazoa</taxon>
        <taxon>Chordata</taxon>
        <taxon>Craniata</taxon>
        <taxon>Vertebrata</taxon>
        <taxon>Euteleostomi</taxon>
        <taxon>Mammalia</taxon>
        <taxon>Eutheria</taxon>
        <taxon>Euarchontoglires</taxon>
        <taxon>Glires</taxon>
        <taxon>Rodentia</taxon>
        <taxon>Myomorpha</taxon>
        <taxon>Muroidea</taxon>
        <taxon>Muridae</taxon>
        <taxon>Murinae</taxon>
        <taxon>Mus</taxon>
        <taxon>Mus</taxon>
    </lineage>
</organism>
<sequence>MKAQTVSPTQGTISESSYVHSNLWSSRKLMIVGVLVGWLLVIHLLVNMWLLILLCASLVALGGWLGSTAILGASGQLHLERFITITTCPPCPEAERQLEQEINRTIQMIIRDFVLSWYRSVSHEPAFEAEMEAAMKGLVQELRRRMSIVDSHALTQRVLTLCGCHLQSYIQAKEATAKEQSCPVQPSQLWDAYCQVTAPHPAMSCPTTEVTYARGIVNLILKELVPKPHLETRTGRHVVVEVITCNVILPLISKLSDPDWIHLILVSIFSKYRHDAAQGTKPPCSSSVLEQPSVPTSLPLIVEVESLPVGKASSPATAPVHLTSSEPAPSPEIEEGHEAVEGDLPGMLEEKKVGNSSSHFLQPDIRGPLFLCEDSELESPLSELSKETILLMTPGNFLSDRIQDALCALDDSGALEPKDGEGSECMEGAEAEEAPGTDTETGMLVSVLNCPEIQIDTADKEVEQGDDTSLTALLEEPEKPCPLRPSCLDKDLASGVCSLEPAMPPVPLSSSPPGPLSSATFSFESLSSPDGPVVIQNLRITGTITAREHSGTGFHPYTLYTVKYETVLNGENSSGLQQLAYHTVNRRYREFLNLQTRLEEKPDLRKFIKNVKGPKKLFPDLPFGNMDSDRVEARKSLLESFLKQLCAIPEIGNSEEVQEFLALNTDARIAFVKKPFMVSRIDKMVVSAIVDTLKTAFPRSEPQSPTEELSEAENESKPQTEGKKASKSRLRFSSSKIAPALSIAEAQDKILYCLQEGNSESEVLSMSGMESFIEKQTKLLRIQPAEVPDKDPQQVPKEYVDSGLLDKAVVAQELNKSGPGTETELADTAFDLILLLLMEQWKWLCTESMQKFLHIIFGTLVQRWLEVQVANLTCPQRWAQYLHLLRESIWPGGVLPKFPRPGRTQAQKAATEKQALQSLMDLLPDFLVEILGVNKCRLSWSLVLESFQQPLINRHLIYCLGDIILELLDLSASVEECAPATSASDSPGSLKKMAVST</sequence>
<keyword id="KW-0002">3D-structure</keyword>
<keyword id="KW-0968">Cytoplasmic vesicle</keyword>
<keyword id="KW-0967">Endosome</keyword>
<keyword id="KW-0268">Exocytosis</keyword>
<keyword id="KW-0446">Lipid-binding</keyword>
<keyword id="KW-0472">Membrane</keyword>
<keyword id="KW-0653">Protein transport</keyword>
<keyword id="KW-1185">Reference proteome</keyword>
<keyword id="KW-0813">Transport</keyword>